<keyword id="KW-0072">Autophagy</keyword>
<keyword id="KW-0597">Phosphoprotein</keyword>
<keyword id="KW-0653">Protein transport</keyword>
<keyword id="KW-0813">Transport</keyword>
<sequence>MNSTNTVVYIKVKGKRPQGFLDPPKFEWNGTKERQLWTMVSNLNYSQDQIDWQNLSKIFETPEFFLKKRTYKLFAEHLELLQLQLEKKRDLEKYSNDQVNEGMSDLIHKYIPTLQNDNLLNVSASPLTTERQDSEEVETEVTNEALQHLQTSKILNIHKKTSDSENKPNDKLDKDGINKEMECGSSDDDLSSSLSVSKSALEEALMDRL</sequence>
<name>ATG29_YEAS7</name>
<evidence type="ECO:0000250" key="1"/>
<evidence type="ECO:0000250" key="2">
    <source>
        <dbReference type="UniProtKB" id="Q12092"/>
    </source>
</evidence>
<evidence type="ECO:0000256" key="3">
    <source>
        <dbReference type="SAM" id="MobiDB-lite"/>
    </source>
</evidence>
<evidence type="ECO:0000305" key="4"/>
<comment type="function">
    <text evidence="1">Plays a role in autophagy. Functions at the preautophagosomal structure (PAS) in order to form normal autophagosomes under starvation conditions. Also plays a role in mitophagy and regulation of filamentous growth (By similarity).</text>
</comment>
<comment type="subunit">
    <text evidence="1">Forms a stable complex with ATG17 and ATG31. Interacts directly with ATG31. The ATG17-ATG29-ATG31 complex interacts with the ATG1-ATG13 complex. Note=The interaction with the ATG1-ATG13 complex is induced by starvation.</text>
</comment>
<comment type="subcellular location">
    <subcellularLocation>
        <location evidence="1">Preautophagosomal structure</location>
    </subcellularLocation>
    <text evidence="1">Also localizes to other perivacuolar punctate structures.</text>
</comment>
<comment type="similarity">
    <text evidence="4">Belongs to the ATG29 family.</text>
</comment>
<protein>
    <recommendedName>
        <fullName>Autophagy-related protein 29</fullName>
    </recommendedName>
</protein>
<gene>
    <name type="primary">ATG29</name>
    <name type="ORF">SCY_5564</name>
</gene>
<organism>
    <name type="scientific">Saccharomyces cerevisiae (strain YJM789)</name>
    <name type="common">Baker's yeast</name>
    <dbReference type="NCBI Taxonomy" id="307796"/>
    <lineage>
        <taxon>Eukaryota</taxon>
        <taxon>Fungi</taxon>
        <taxon>Dikarya</taxon>
        <taxon>Ascomycota</taxon>
        <taxon>Saccharomycotina</taxon>
        <taxon>Saccharomycetes</taxon>
        <taxon>Saccharomycetales</taxon>
        <taxon>Saccharomycetaceae</taxon>
        <taxon>Saccharomyces</taxon>
    </lineage>
</organism>
<accession>A6ZW87</accession>
<feature type="chain" id="PRO_0000318061" description="Autophagy-related protein 29">
    <location>
        <begin position="1"/>
        <end position="209"/>
    </location>
</feature>
<feature type="region of interest" description="Disordered" evidence="3">
    <location>
        <begin position="156"/>
        <end position="198"/>
    </location>
</feature>
<feature type="compositionally biased region" description="Basic and acidic residues" evidence="3">
    <location>
        <begin position="160"/>
        <end position="182"/>
    </location>
</feature>
<feature type="modified residue" description="Phosphoserine" evidence="2">
    <location>
        <position position="104"/>
    </location>
</feature>
<feature type="modified residue" description="Phosphoserine" evidence="2">
    <location>
        <position position="185"/>
    </location>
</feature>
<feature type="modified residue" description="Phosphoserine" evidence="2">
    <location>
        <position position="186"/>
    </location>
</feature>
<proteinExistence type="inferred from homology"/>
<dbReference type="EMBL" id="AAFW02000135">
    <property type="protein sequence ID" value="EDN60979.1"/>
    <property type="molecule type" value="Genomic_DNA"/>
</dbReference>
<dbReference type="SMR" id="A6ZW87"/>
<dbReference type="HOGENOM" id="CLU_121102_0_0_1"/>
<dbReference type="OrthoDB" id="5932at4893"/>
<dbReference type="Proteomes" id="UP000007060">
    <property type="component" value="Unassembled WGS sequence"/>
</dbReference>
<dbReference type="GO" id="GO:0000407">
    <property type="term" value="C:phagophore assembly site"/>
    <property type="evidence" value="ECO:0007669"/>
    <property type="project" value="UniProtKB-SubCell"/>
</dbReference>
<dbReference type="GO" id="GO:0000045">
    <property type="term" value="P:autophagosome assembly"/>
    <property type="evidence" value="ECO:0007669"/>
    <property type="project" value="InterPro"/>
</dbReference>
<dbReference type="GO" id="GO:0015031">
    <property type="term" value="P:protein transport"/>
    <property type="evidence" value="ECO:0007669"/>
    <property type="project" value="UniProtKB-KW"/>
</dbReference>
<dbReference type="FunFam" id="1.10.10.2570:FF:000001">
    <property type="entry name" value="Autophagy-related protein 29"/>
    <property type="match status" value="1"/>
</dbReference>
<dbReference type="Gene3D" id="1.10.10.2570">
    <property type="match status" value="1"/>
</dbReference>
<dbReference type="InterPro" id="IPR039113">
    <property type="entry name" value="ATG29"/>
</dbReference>
<dbReference type="InterPro" id="IPR040666">
    <property type="entry name" value="Atg29_N"/>
</dbReference>
<dbReference type="InterPro" id="IPR039362">
    <property type="entry name" value="ATG29_sf"/>
</dbReference>
<dbReference type="PANTHER" id="PTHR40012">
    <property type="entry name" value="AUTOPHAGY-RELATED PROTEIN 29"/>
    <property type="match status" value="1"/>
</dbReference>
<dbReference type="PANTHER" id="PTHR40012:SF1">
    <property type="entry name" value="AUTOPHAGY-RELATED PROTEIN 29"/>
    <property type="match status" value="1"/>
</dbReference>
<dbReference type="Pfam" id="PF18388">
    <property type="entry name" value="ATG29_N"/>
    <property type="match status" value="1"/>
</dbReference>
<reference key="1">
    <citation type="journal article" date="2007" name="Proc. Natl. Acad. Sci. U.S.A.">
        <title>Genome sequencing and comparative analysis of Saccharomyces cerevisiae strain YJM789.</title>
        <authorList>
            <person name="Wei W."/>
            <person name="McCusker J.H."/>
            <person name="Hyman R.W."/>
            <person name="Jones T."/>
            <person name="Ning Y."/>
            <person name="Cao Z."/>
            <person name="Gu Z."/>
            <person name="Bruno D."/>
            <person name="Miranda M."/>
            <person name="Nguyen M."/>
            <person name="Wilhelmy J."/>
            <person name="Komp C."/>
            <person name="Tamse R."/>
            <person name="Wang X."/>
            <person name="Jia P."/>
            <person name="Luedi P."/>
            <person name="Oefner P.J."/>
            <person name="David L."/>
            <person name="Dietrich F.S."/>
            <person name="Li Y."/>
            <person name="Davis R.W."/>
            <person name="Steinmetz L.M."/>
        </authorList>
    </citation>
    <scope>NUCLEOTIDE SEQUENCE [LARGE SCALE GENOMIC DNA]</scope>
    <source>
        <strain>YJM789</strain>
    </source>
</reference>